<keyword id="KW-0479">Metal-binding</keyword>
<keyword id="KW-0687">Ribonucleoprotein</keyword>
<keyword id="KW-0689">Ribosomal protein</keyword>
<keyword id="KW-0694">RNA-binding</keyword>
<keyword id="KW-0699">rRNA-binding</keyword>
<keyword id="KW-0862">Zinc</keyword>
<name>RS14Z_MOOTA</name>
<dbReference type="EMBL" id="CP000232">
    <property type="protein sequence ID" value="ABC20729.1"/>
    <property type="molecule type" value="Genomic_DNA"/>
</dbReference>
<dbReference type="RefSeq" id="YP_431272.1">
    <property type="nucleotide sequence ID" value="NC_007644.1"/>
</dbReference>
<dbReference type="SMR" id="Q2RFR0"/>
<dbReference type="STRING" id="264732.Moth_2447"/>
<dbReference type="EnsemblBacteria" id="ABC20729">
    <property type="protein sequence ID" value="ABC20729"/>
    <property type="gene ID" value="Moth_2447"/>
</dbReference>
<dbReference type="KEGG" id="mta:Moth_2447"/>
<dbReference type="PATRIC" id="fig|264732.11.peg.2665"/>
<dbReference type="eggNOG" id="COG0199">
    <property type="taxonomic scope" value="Bacteria"/>
</dbReference>
<dbReference type="HOGENOM" id="CLU_139869_3_0_9"/>
<dbReference type="OrthoDB" id="9810484at2"/>
<dbReference type="GO" id="GO:0005737">
    <property type="term" value="C:cytoplasm"/>
    <property type="evidence" value="ECO:0007669"/>
    <property type="project" value="UniProtKB-ARBA"/>
</dbReference>
<dbReference type="GO" id="GO:0015935">
    <property type="term" value="C:small ribosomal subunit"/>
    <property type="evidence" value="ECO:0007669"/>
    <property type="project" value="TreeGrafter"/>
</dbReference>
<dbReference type="GO" id="GO:0019843">
    <property type="term" value="F:rRNA binding"/>
    <property type="evidence" value="ECO:0007669"/>
    <property type="project" value="UniProtKB-UniRule"/>
</dbReference>
<dbReference type="GO" id="GO:0003735">
    <property type="term" value="F:structural constituent of ribosome"/>
    <property type="evidence" value="ECO:0007669"/>
    <property type="project" value="InterPro"/>
</dbReference>
<dbReference type="GO" id="GO:0008270">
    <property type="term" value="F:zinc ion binding"/>
    <property type="evidence" value="ECO:0007669"/>
    <property type="project" value="UniProtKB-UniRule"/>
</dbReference>
<dbReference type="GO" id="GO:0006412">
    <property type="term" value="P:translation"/>
    <property type="evidence" value="ECO:0007669"/>
    <property type="project" value="UniProtKB-UniRule"/>
</dbReference>
<dbReference type="FunFam" id="4.10.830.10:FF:000001">
    <property type="entry name" value="30S ribosomal protein S14 type Z"/>
    <property type="match status" value="1"/>
</dbReference>
<dbReference type="Gene3D" id="4.10.830.10">
    <property type="entry name" value="30s Ribosomal Protein S14, Chain N"/>
    <property type="match status" value="1"/>
</dbReference>
<dbReference type="HAMAP" id="MF_01364_B">
    <property type="entry name" value="Ribosomal_uS14_2_B"/>
    <property type="match status" value="1"/>
</dbReference>
<dbReference type="InterPro" id="IPR001209">
    <property type="entry name" value="Ribosomal_uS14"/>
</dbReference>
<dbReference type="InterPro" id="IPR023053">
    <property type="entry name" value="Ribosomal_uS14_bact"/>
</dbReference>
<dbReference type="InterPro" id="IPR018271">
    <property type="entry name" value="Ribosomal_uS14_CS"/>
</dbReference>
<dbReference type="InterPro" id="IPR043140">
    <property type="entry name" value="Ribosomal_uS14_sf"/>
</dbReference>
<dbReference type="NCBIfam" id="NF005974">
    <property type="entry name" value="PRK08061.1"/>
    <property type="match status" value="1"/>
</dbReference>
<dbReference type="PANTHER" id="PTHR19836">
    <property type="entry name" value="30S RIBOSOMAL PROTEIN S14"/>
    <property type="match status" value="1"/>
</dbReference>
<dbReference type="PANTHER" id="PTHR19836:SF19">
    <property type="entry name" value="SMALL RIBOSOMAL SUBUNIT PROTEIN US14M"/>
    <property type="match status" value="1"/>
</dbReference>
<dbReference type="Pfam" id="PF00253">
    <property type="entry name" value="Ribosomal_S14"/>
    <property type="match status" value="1"/>
</dbReference>
<dbReference type="SUPFAM" id="SSF57716">
    <property type="entry name" value="Glucocorticoid receptor-like (DNA-binding domain)"/>
    <property type="match status" value="1"/>
</dbReference>
<dbReference type="PROSITE" id="PS00527">
    <property type="entry name" value="RIBOSOMAL_S14"/>
    <property type="match status" value="1"/>
</dbReference>
<proteinExistence type="inferred from homology"/>
<evidence type="ECO:0000255" key="1">
    <source>
        <dbReference type="HAMAP-Rule" id="MF_01364"/>
    </source>
</evidence>
<evidence type="ECO:0000305" key="2"/>
<organism>
    <name type="scientific">Moorella thermoacetica (strain ATCC 39073 / JCM 9320)</name>
    <dbReference type="NCBI Taxonomy" id="264732"/>
    <lineage>
        <taxon>Bacteria</taxon>
        <taxon>Bacillati</taxon>
        <taxon>Bacillota</taxon>
        <taxon>Clostridia</taxon>
        <taxon>Moorellales</taxon>
        <taxon>Moorellaceae</taxon>
        <taxon>Moorella</taxon>
    </lineage>
</organism>
<feature type="chain" id="PRO_0000269115" description="Small ribosomal subunit protein uS14">
    <location>
        <begin position="1"/>
        <end position="61"/>
    </location>
</feature>
<feature type="binding site" evidence="1">
    <location>
        <position position="24"/>
    </location>
    <ligand>
        <name>Zn(2+)</name>
        <dbReference type="ChEBI" id="CHEBI:29105"/>
    </ligand>
</feature>
<feature type="binding site" evidence="1">
    <location>
        <position position="27"/>
    </location>
    <ligand>
        <name>Zn(2+)</name>
        <dbReference type="ChEBI" id="CHEBI:29105"/>
    </ligand>
</feature>
<feature type="binding site" evidence="1">
    <location>
        <position position="40"/>
    </location>
    <ligand>
        <name>Zn(2+)</name>
        <dbReference type="ChEBI" id="CHEBI:29105"/>
    </ligand>
</feature>
<feature type="binding site" evidence="1">
    <location>
        <position position="43"/>
    </location>
    <ligand>
        <name>Zn(2+)</name>
        <dbReference type="ChEBI" id="CHEBI:29105"/>
    </ligand>
</feature>
<accession>Q2RFR0</accession>
<comment type="function">
    <text evidence="1">Binds 16S rRNA, required for the assembly of 30S particles and may also be responsible for determining the conformation of the 16S rRNA at the A site.</text>
</comment>
<comment type="cofactor">
    <cofactor evidence="1">
        <name>Zn(2+)</name>
        <dbReference type="ChEBI" id="CHEBI:29105"/>
    </cofactor>
    <text evidence="1">Binds 1 zinc ion per subunit.</text>
</comment>
<comment type="subunit">
    <text evidence="1">Part of the 30S ribosomal subunit. Contacts proteins S3 and S10.</text>
</comment>
<comment type="similarity">
    <text evidence="1">Belongs to the universal ribosomal protein uS14 family. Zinc-binding uS14 subfamily.</text>
</comment>
<sequence>MAKKSLRVKQARPQKFKVRAYNRCLRCGRPHGYMRKFGLCRICFRELAYKGELPGIVKASW</sequence>
<protein>
    <recommendedName>
        <fullName evidence="1">Small ribosomal subunit protein uS14</fullName>
    </recommendedName>
    <alternativeName>
        <fullName evidence="2">30S ribosomal protein S14 type Z</fullName>
    </alternativeName>
</protein>
<gene>
    <name evidence="1" type="primary">rpsZ</name>
    <name evidence="1" type="synonym">rpsN</name>
    <name type="ordered locus">Moth_2447</name>
</gene>
<reference key="1">
    <citation type="journal article" date="2008" name="Environ. Microbiol.">
        <title>The complete genome sequence of Moorella thermoacetica (f. Clostridium thermoaceticum).</title>
        <authorList>
            <person name="Pierce E."/>
            <person name="Xie G."/>
            <person name="Barabote R.D."/>
            <person name="Saunders E."/>
            <person name="Han C.S."/>
            <person name="Detter J.C."/>
            <person name="Richardson P."/>
            <person name="Brettin T.S."/>
            <person name="Das A."/>
            <person name="Ljungdahl L.G."/>
            <person name="Ragsdale S.W."/>
        </authorList>
    </citation>
    <scope>NUCLEOTIDE SEQUENCE [LARGE SCALE GENOMIC DNA]</scope>
    <source>
        <strain>ATCC 39073 / JCM 9320</strain>
    </source>
</reference>